<proteinExistence type="evidence at protein level"/>
<accession>P9WLN7</accession>
<accession>L0T8C0</accession>
<accession>P64917</accession>
<accession>Q10857</accession>
<gene>
    <name type="ordered locus">Rv2000</name>
    <name type="ORF">MTCY39.18c</name>
</gene>
<protein>
    <recommendedName>
        <fullName>Uncharacterized protein Rv2000</fullName>
    </recommendedName>
</protein>
<name>Y2000_MYCTU</name>
<keyword id="KW-1185">Reference proteome</keyword>
<feature type="chain" id="PRO_0000103927" description="Uncharacterized protein Rv2000">
    <location>
        <begin position="1"/>
        <end position="537"/>
    </location>
</feature>
<sequence length="537" mass="59895">MRPGFVGLGFGQWPVYVVRWPKLHLTPRQRKRVLHRRRLLTDRPISLSQIPIRTGGPMNDPWPRPTQGPAKTIETDYLVIGAGAMGMAFTDTLITESGARVVMIDRACQPGGHWTTAYPFVRLHQPSAYYGVNSRALGNNTIDLVGWNQGLNELAPVGEICAYFDAVLQQQLLPTGRVDYFPMSEYLGDGRFRTLAGTEYVVTVNRRIVDATYLRAVVPSMRPAPYSVAPGVDCVAPNELPKLGTRDRYVVVGAGKTGMDVCLWLLRNDVCPDKLTWIMPRDSWLIDRATLQPGPTFVRQFRESYGATLEAIGAATSTDDLFDRLETAGTLLRIDPSVRPSMYRCATVSHLELEQLRRIRDIVRMGHVQRIEPTTIVLDGGSVPATPTALYIDCTADGAPQRPAKPVFDADHLTLQAVRGCQQVFSAAFIAHVEFAYEDDAVKNELCTPIPHPDCDLDWMRLMHSDLGNFQRWLNDPDLTDWLSSARLNLLADLLPPLSHKPRVRERVVSMFQKRLGTAGDQLAKLLDAATATTEQR</sequence>
<reference key="1">
    <citation type="journal article" date="1998" name="Nature">
        <title>Deciphering the biology of Mycobacterium tuberculosis from the complete genome sequence.</title>
        <authorList>
            <person name="Cole S.T."/>
            <person name="Brosch R."/>
            <person name="Parkhill J."/>
            <person name="Garnier T."/>
            <person name="Churcher C.M."/>
            <person name="Harris D.E."/>
            <person name="Gordon S.V."/>
            <person name="Eiglmeier K."/>
            <person name="Gas S."/>
            <person name="Barry C.E. III"/>
            <person name="Tekaia F."/>
            <person name="Badcock K."/>
            <person name="Basham D."/>
            <person name="Brown D."/>
            <person name="Chillingworth T."/>
            <person name="Connor R."/>
            <person name="Davies R.M."/>
            <person name="Devlin K."/>
            <person name="Feltwell T."/>
            <person name="Gentles S."/>
            <person name="Hamlin N."/>
            <person name="Holroyd S."/>
            <person name="Hornsby T."/>
            <person name="Jagels K."/>
            <person name="Krogh A."/>
            <person name="McLean J."/>
            <person name="Moule S."/>
            <person name="Murphy L.D."/>
            <person name="Oliver S."/>
            <person name="Osborne J."/>
            <person name="Quail M.A."/>
            <person name="Rajandream M.A."/>
            <person name="Rogers J."/>
            <person name="Rutter S."/>
            <person name="Seeger K."/>
            <person name="Skelton S."/>
            <person name="Squares S."/>
            <person name="Squares R."/>
            <person name="Sulston J.E."/>
            <person name="Taylor K."/>
            <person name="Whitehead S."/>
            <person name="Barrell B.G."/>
        </authorList>
    </citation>
    <scope>NUCLEOTIDE SEQUENCE [LARGE SCALE GENOMIC DNA]</scope>
    <source>
        <strain>ATCC 25618 / H37Rv</strain>
    </source>
</reference>
<reference key="2">
    <citation type="journal article" date="2011" name="Mol. Cell. Proteomics">
        <title>Proteogenomic analysis of Mycobacterium tuberculosis by high resolution mass spectrometry.</title>
        <authorList>
            <person name="Kelkar D.S."/>
            <person name="Kumar D."/>
            <person name="Kumar P."/>
            <person name="Balakrishnan L."/>
            <person name="Muthusamy B."/>
            <person name="Yadav A.K."/>
            <person name="Shrivastava P."/>
            <person name="Marimuthu A."/>
            <person name="Anand S."/>
            <person name="Sundaram H."/>
            <person name="Kingsbury R."/>
            <person name="Harsha H.C."/>
            <person name="Nair B."/>
            <person name="Prasad T.S."/>
            <person name="Chauhan D.S."/>
            <person name="Katoch K."/>
            <person name="Katoch V.M."/>
            <person name="Kumar P."/>
            <person name="Chaerkady R."/>
            <person name="Ramachandran S."/>
            <person name="Dash D."/>
            <person name="Pandey A."/>
        </authorList>
    </citation>
    <scope>IDENTIFICATION BY MASS SPECTROMETRY [LARGE SCALE ANALYSIS]</scope>
    <source>
        <strain>ATCC 25618 / H37Rv</strain>
    </source>
</reference>
<organism>
    <name type="scientific">Mycobacterium tuberculosis (strain ATCC 25618 / H37Rv)</name>
    <dbReference type="NCBI Taxonomy" id="83332"/>
    <lineage>
        <taxon>Bacteria</taxon>
        <taxon>Bacillati</taxon>
        <taxon>Actinomycetota</taxon>
        <taxon>Actinomycetes</taxon>
        <taxon>Mycobacteriales</taxon>
        <taxon>Mycobacteriaceae</taxon>
        <taxon>Mycobacterium</taxon>
        <taxon>Mycobacterium tuberculosis complex</taxon>
    </lineage>
</organism>
<dbReference type="EMBL" id="AL123456">
    <property type="protein sequence ID" value="CCP44772.1"/>
    <property type="molecule type" value="Genomic_DNA"/>
</dbReference>
<dbReference type="PIR" id="F70758">
    <property type="entry name" value="F70758"/>
</dbReference>
<dbReference type="RefSeq" id="NP_216516.1">
    <property type="nucleotide sequence ID" value="NC_000962.3"/>
</dbReference>
<dbReference type="RefSeq" id="WP_003410042.1">
    <property type="nucleotide sequence ID" value="NZ_NVQJ01000043.1"/>
</dbReference>
<dbReference type="SMR" id="P9WLN7"/>
<dbReference type="STRING" id="83332.Rv2000"/>
<dbReference type="PaxDb" id="83332-Rv2000"/>
<dbReference type="GeneID" id="888864"/>
<dbReference type="KEGG" id="mtu:Rv2000"/>
<dbReference type="KEGG" id="mtv:RVBD_2000"/>
<dbReference type="PATRIC" id="fig|83332.111.peg.2226"/>
<dbReference type="TubercuList" id="Rv2000"/>
<dbReference type="eggNOG" id="COG0121">
    <property type="taxonomic scope" value="Bacteria"/>
</dbReference>
<dbReference type="eggNOG" id="COG2072">
    <property type="taxonomic scope" value="Bacteria"/>
</dbReference>
<dbReference type="InParanoid" id="P9WLN7"/>
<dbReference type="OrthoDB" id="9773233at2"/>
<dbReference type="Proteomes" id="UP000001584">
    <property type="component" value="Chromosome"/>
</dbReference>
<dbReference type="GO" id="GO:0005829">
    <property type="term" value="C:cytosol"/>
    <property type="evidence" value="ECO:0007005"/>
    <property type="project" value="MTBBASE"/>
</dbReference>
<dbReference type="GO" id="GO:0009274">
    <property type="term" value="C:peptidoglycan-based cell wall"/>
    <property type="evidence" value="ECO:0007005"/>
    <property type="project" value="MTBBASE"/>
</dbReference>
<dbReference type="GO" id="GO:0005886">
    <property type="term" value="C:plasma membrane"/>
    <property type="evidence" value="ECO:0007005"/>
    <property type="project" value="MTBBASE"/>
</dbReference>
<dbReference type="GO" id="GO:0050660">
    <property type="term" value="F:flavin adenine dinucleotide binding"/>
    <property type="evidence" value="ECO:0000318"/>
    <property type="project" value="GO_Central"/>
</dbReference>
<dbReference type="GO" id="GO:0004497">
    <property type="term" value="F:monooxygenase activity"/>
    <property type="evidence" value="ECO:0000318"/>
    <property type="project" value="GO_Central"/>
</dbReference>
<dbReference type="Gene3D" id="3.50.50.60">
    <property type="entry name" value="FAD/NAD(P)-binding domain"/>
    <property type="match status" value="1"/>
</dbReference>
<dbReference type="InterPro" id="IPR036188">
    <property type="entry name" value="FAD/NAD-bd_sf"/>
</dbReference>
<dbReference type="Pfam" id="PF13450">
    <property type="entry name" value="NAD_binding_8"/>
    <property type="match status" value="1"/>
</dbReference>
<dbReference type="SUPFAM" id="SSF51971">
    <property type="entry name" value="Nucleotide-binding domain"/>
    <property type="match status" value="1"/>
</dbReference>